<proteinExistence type="inferred from homology"/>
<accession>Q94VC3</accession>
<keyword id="KW-0249">Electron transport</keyword>
<keyword id="KW-0472">Membrane</keyword>
<keyword id="KW-0496">Mitochondrion</keyword>
<keyword id="KW-0999">Mitochondrion inner membrane</keyword>
<keyword id="KW-0520">NAD</keyword>
<keyword id="KW-0679">Respiratory chain</keyword>
<keyword id="KW-1278">Translocase</keyword>
<keyword id="KW-0812">Transmembrane</keyword>
<keyword id="KW-1133">Transmembrane helix</keyword>
<keyword id="KW-0813">Transport</keyword>
<keyword id="KW-0830">Ubiquinone</keyword>
<gene>
    <name type="primary">MT-ND1</name>
    <name type="synonym">MTND1</name>
    <name type="synonym">NADH1</name>
    <name type="synonym">ND1</name>
</gene>
<evidence type="ECO:0000250" key="1"/>
<evidence type="ECO:0000255" key="2"/>
<evidence type="ECO:0000305" key="3"/>
<reference key="1">
    <citation type="journal article" date="2001" name="Cladistics">
        <title>Mitochondrial DNA evidence and evolution in Varanoidea (Squamata).</title>
        <authorList>
            <person name="Ast J.C."/>
        </authorList>
    </citation>
    <scope>NUCLEOTIDE SEQUENCE [GENOMIC DNA]</scope>
    <source>
        <strain>Isolate UMMZ 210506</strain>
    </source>
</reference>
<sequence length="318" mass="35304">MLPITNSLTYIIPILIAVAFLTLTERKILGYMQLRKGPNITGPYGLLQPIADGLKLFIKEPIRPLNTSPTLLILSPILALTTAMLIWTPIPMPHALTNLNLGLLSILAISSMAVNSTLWAGWASNSKYALIGSLRAVAQTISYEVTLGIILLSILILTGGFTMQLLTTTQKHIWLLTTSWPLTMMWFISTLAETNRAPFDLTEGESELVSGFNVEYAGGPFALFFLAEYTNIISMNLLTCIMFINPGPTQHPELFLINLVTKTLLLSLTFLWIRASYPRFRYDQLMHLLWKQFLPLTMALCLLQASLLVSISGIPPLP</sequence>
<geneLocation type="mitochondrion"/>
<dbReference type="EC" id="7.1.1.2"/>
<dbReference type="EMBL" id="AF407521">
    <property type="protein sequence ID" value="AAL10114.1"/>
    <property type="molecule type" value="Genomic_DNA"/>
</dbReference>
<dbReference type="SMR" id="Q94VC3"/>
<dbReference type="GO" id="GO:0005743">
    <property type="term" value="C:mitochondrial inner membrane"/>
    <property type="evidence" value="ECO:0007669"/>
    <property type="project" value="UniProtKB-SubCell"/>
</dbReference>
<dbReference type="GO" id="GO:0008137">
    <property type="term" value="F:NADH dehydrogenase (ubiquinone) activity"/>
    <property type="evidence" value="ECO:0007669"/>
    <property type="project" value="UniProtKB-EC"/>
</dbReference>
<dbReference type="GO" id="GO:0009060">
    <property type="term" value="P:aerobic respiration"/>
    <property type="evidence" value="ECO:0007669"/>
    <property type="project" value="TreeGrafter"/>
</dbReference>
<dbReference type="HAMAP" id="MF_01350">
    <property type="entry name" value="NDH1_NuoH"/>
    <property type="match status" value="1"/>
</dbReference>
<dbReference type="InterPro" id="IPR001694">
    <property type="entry name" value="NADH_UbQ_OxRdtase_su1/FPO"/>
</dbReference>
<dbReference type="InterPro" id="IPR018086">
    <property type="entry name" value="NADH_UbQ_OxRdtase_su1_CS"/>
</dbReference>
<dbReference type="PANTHER" id="PTHR11432">
    <property type="entry name" value="NADH DEHYDROGENASE SUBUNIT 1"/>
    <property type="match status" value="1"/>
</dbReference>
<dbReference type="PANTHER" id="PTHR11432:SF3">
    <property type="entry name" value="NADH-UBIQUINONE OXIDOREDUCTASE CHAIN 1"/>
    <property type="match status" value="1"/>
</dbReference>
<dbReference type="Pfam" id="PF00146">
    <property type="entry name" value="NADHdh"/>
    <property type="match status" value="1"/>
</dbReference>
<dbReference type="PROSITE" id="PS00667">
    <property type="entry name" value="COMPLEX1_ND1_1"/>
    <property type="match status" value="1"/>
</dbReference>
<dbReference type="PROSITE" id="PS00668">
    <property type="entry name" value="COMPLEX1_ND1_2"/>
    <property type="match status" value="1"/>
</dbReference>
<comment type="function">
    <text evidence="1">Core subunit of the mitochondrial membrane respiratory chain NADH dehydrogenase (Complex I) that is believed to belong to the minimal assembly required for catalysis. Complex I functions in the transfer of electrons from NADH to the respiratory chain. The immediate electron acceptor for the enzyme is believed to be ubiquinone (By similarity).</text>
</comment>
<comment type="catalytic activity">
    <reaction>
        <text>a ubiquinone + NADH + 5 H(+)(in) = a ubiquinol + NAD(+) + 4 H(+)(out)</text>
        <dbReference type="Rhea" id="RHEA:29091"/>
        <dbReference type="Rhea" id="RHEA-COMP:9565"/>
        <dbReference type="Rhea" id="RHEA-COMP:9566"/>
        <dbReference type="ChEBI" id="CHEBI:15378"/>
        <dbReference type="ChEBI" id="CHEBI:16389"/>
        <dbReference type="ChEBI" id="CHEBI:17976"/>
        <dbReference type="ChEBI" id="CHEBI:57540"/>
        <dbReference type="ChEBI" id="CHEBI:57945"/>
        <dbReference type="EC" id="7.1.1.2"/>
    </reaction>
</comment>
<comment type="subcellular location">
    <subcellularLocation>
        <location evidence="1">Mitochondrion inner membrane</location>
        <topology evidence="1">Multi-pass membrane protein</topology>
    </subcellularLocation>
</comment>
<comment type="similarity">
    <text evidence="3">Belongs to the complex I subunit 1 family.</text>
</comment>
<feature type="chain" id="PRO_0000117497" description="NADH-ubiquinone oxidoreductase chain 1">
    <location>
        <begin position="1"/>
        <end position="318"/>
    </location>
</feature>
<feature type="transmembrane region" description="Helical" evidence="2">
    <location>
        <begin position="1"/>
        <end position="21"/>
    </location>
</feature>
<feature type="transmembrane region" description="Helical" evidence="2">
    <location>
        <begin position="71"/>
        <end position="91"/>
    </location>
</feature>
<feature type="transmembrane region" description="Helical" evidence="2">
    <location>
        <begin position="101"/>
        <end position="121"/>
    </location>
</feature>
<feature type="transmembrane region" description="Helical" evidence="2">
    <location>
        <begin position="145"/>
        <end position="165"/>
    </location>
</feature>
<feature type="transmembrane region" description="Helical" evidence="2">
    <location>
        <begin position="172"/>
        <end position="192"/>
    </location>
</feature>
<feature type="transmembrane region" description="Helical" evidence="2">
    <location>
        <begin position="224"/>
        <end position="244"/>
    </location>
</feature>
<feature type="transmembrane region" description="Helical" evidence="2">
    <location>
        <begin position="253"/>
        <end position="273"/>
    </location>
</feature>
<feature type="transmembrane region" description="Helical" evidence="2">
    <location>
        <begin position="294"/>
        <end position="314"/>
    </location>
</feature>
<protein>
    <recommendedName>
        <fullName>NADH-ubiquinone oxidoreductase chain 1</fullName>
        <ecNumber>7.1.1.2</ecNumber>
    </recommendedName>
    <alternativeName>
        <fullName>NADH dehydrogenase subunit 1</fullName>
    </alternativeName>
</protein>
<organism>
    <name type="scientific">Varanus rudicollis</name>
    <name type="common">Rough-necked monitor lizard</name>
    <dbReference type="NCBI Taxonomy" id="169851"/>
    <lineage>
        <taxon>Eukaryota</taxon>
        <taxon>Metazoa</taxon>
        <taxon>Chordata</taxon>
        <taxon>Craniata</taxon>
        <taxon>Vertebrata</taxon>
        <taxon>Euteleostomi</taxon>
        <taxon>Lepidosauria</taxon>
        <taxon>Squamata</taxon>
        <taxon>Bifurcata</taxon>
        <taxon>Unidentata</taxon>
        <taxon>Episquamata</taxon>
        <taxon>Toxicofera</taxon>
        <taxon>Anguimorpha</taxon>
        <taxon>Paleoanguimorpha</taxon>
        <taxon>Varanoidea</taxon>
        <taxon>Varanidae</taxon>
        <taxon>Varanus</taxon>
    </lineage>
</organism>
<name>NU1M_VARRU</name>